<gene>
    <name type="primary">ytaB</name>
    <name type="ordered locus">BSU30930</name>
</gene>
<feature type="chain" id="PRO_0000387983" description="Uncharacterized membrane protein YtaB">
    <location>
        <begin position="1"/>
        <end position="155"/>
    </location>
</feature>
<feature type="transmembrane region" description="Helical" evidence="1">
    <location>
        <begin position="4"/>
        <end position="24"/>
    </location>
</feature>
<feature type="transmembrane region" description="Helical" evidence="1">
    <location>
        <begin position="46"/>
        <end position="66"/>
    </location>
</feature>
<feature type="transmembrane region" description="Helical" evidence="1">
    <location>
        <begin position="77"/>
        <end position="97"/>
    </location>
</feature>
<feature type="transmembrane region" description="Helical" evidence="1">
    <location>
        <begin position="101"/>
        <end position="121"/>
    </location>
</feature>
<feature type="transmembrane region" description="Helical" evidence="1">
    <location>
        <begin position="130"/>
        <end position="150"/>
    </location>
</feature>
<evidence type="ECO:0000255" key="1"/>
<evidence type="ECO:0000305" key="2"/>
<protein>
    <recommendedName>
        <fullName>Uncharacterized membrane protein YtaB</fullName>
    </recommendedName>
</protein>
<name>YTAB_BACSU</name>
<organism>
    <name type="scientific">Bacillus subtilis (strain 168)</name>
    <dbReference type="NCBI Taxonomy" id="224308"/>
    <lineage>
        <taxon>Bacteria</taxon>
        <taxon>Bacillati</taxon>
        <taxon>Bacillota</taxon>
        <taxon>Bacilli</taxon>
        <taxon>Bacillales</taxon>
        <taxon>Bacillaceae</taxon>
        <taxon>Bacillus</taxon>
    </lineage>
</organism>
<proteinExistence type="inferred from homology"/>
<accession>O34694</accession>
<accession>Q7BVV1</accession>
<comment type="subcellular location">
    <subcellularLocation>
        <location evidence="2">Cell membrane</location>
        <topology evidence="2">Multi-pass membrane protein</topology>
    </subcellularLocation>
</comment>
<comment type="similarity">
    <text evidence="2">Belongs to the TspO/BZRP family.</text>
</comment>
<keyword id="KW-1003">Cell membrane</keyword>
<keyword id="KW-0472">Membrane</keyword>
<keyword id="KW-1185">Reference proteome</keyword>
<keyword id="KW-0812">Transmembrane</keyword>
<keyword id="KW-1133">Transmembrane helix</keyword>
<sequence length="155" mass="17289">MKKIVGALAVFVITYALFSAAGYLFPVDQEWYNSLKKPDWTPSGTAIGIIWAILFALISLSAAIVYAAFSFKGAKSFWFTLLINYVLNQAFSYFQFTQKNLLAASLDCLLVAITAIVLLIIAKKYSRAASYLLLPYFLWSAFATFLSFTINSMNL</sequence>
<dbReference type="EMBL" id="AF008220">
    <property type="protein sequence ID" value="AAC00363.1"/>
    <property type="molecule type" value="Genomic_DNA"/>
</dbReference>
<dbReference type="EMBL" id="AL009126">
    <property type="protein sequence ID" value="CAB15071.1"/>
    <property type="molecule type" value="Genomic_DNA"/>
</dbReference>
<dbReference type="PIR" id="G69987">
    <property type="entry name" value="G69987"/>
</dbReference>
<dbReference type="RefSeq" id="NP_390971.1">
    <property type="nucleotide sequence ID" value="NC_000964.3"/>
</dbReference>
<dbReference type="RefSeq" id="WP_003229024.1">
    <property type="nucleotide sequence ID" value="NZ_OZ025638.1"/>
</dbReference>
<dbReference type="SMR" id="O34694"/>
<dbReference type="FunCoup" id="O34694">
    <property type="interactions" value="112"/>
</dbReference>
<dbReference type="STRING" id="224308.BSU30930"/>
<dbReference type="PaxDb" id="224308-BSU30930"/>
<dbReference type="DNASU" id="938164"/>
<dbReference type="EnsemblBacteria" id="CAB15071">
    <property type="protein sequence ID" value="CAB15071"/>
    <property type="gene ID" value="BSU_30930"/>
</dbReference>
<dbReference type="GeneID" id="938164"/>
<dbReference type="KEGG" id="bsu:BSU30930"/>
<dbReference type="PATRIC" id="fig|224308.179.peg.3352"/>
<dbReference type="eggNOG" id="COG3476">
    <property type="taxonomic scope" value="Bacteria"/>
</dbReference>
<dbReference type="InParanoid" id="O34694"/>
<dbReference type="OrthoDB" id="9795496at2"/>
<dbReference type="BioCyc" id="BSUB:BSU30930-MONOMER"/>
<dbReference type="Proteomes" id="UP000001570">
    <property type="component" value="Chromosome"/>
</dbReference>
<dbReference type="GO" id="GO:0016020">
    <property type="term" value="C:membrane"/>
    <property type="evidence" value="ECO:0000318"/>
    <property type="project" value="GO_Central"/>
</dbReference>
<dbReference type="GO" id="GO:0005886">
    <property type="term" value="C:plasma membrane"/>
    <property type="evidence" value="ECO:0007669"/>
    <property type="project" value="UniProtKB-SubCell"/>
</dbReference>
<dbReference type="GO" id="GO:0033013">
    <property type="term" value="P:tetrapyrrole metabolic process"/>
    <property type="evidence" value="ECO:0007669"/>
    <property type="project" value="UniProtKB-ARBA"/>
</dbReference>
<dbReference type="CDD" id="cd15904">
    <property type="entry name" value="TSPO_MBR"/>
    <property type="match status" value="1"/>
</dbReference>
<dbReference type="FunFam" id="1.20.1260.100:FF:000001">
    <property type="entry name" value="translocator protein 2"/>
    <property type="match status" value="1"/>
</dbReference>
<dbReference type="Gene3D" id="1.20.1260.100">
    <property type="entry name" value="TspO/MBR protein"/>
    <property type="match status" value="1"/>
</dbReference>
<dbReference type="InterPro" id="IPR038330">
    <property type="entry name" value="TspO/MBR-related_sf"/>
</dbReference>
<dbReference type="InterPro" id="IPR004307">
    <property type="entry name" value="TspO_MBR"/>
</dbReference>
<dbReference type="PANTHER" id="PTHR10057">
    <property type="entry name" value="PERIPHERAL-TYPE BENZODIAZEPINE RECEPTOR"/>
    <property type="match status" value="1"/>
</dbReference>
<dbReference type="PANTHER" id="PTHR10057:SF0">
    <property type="entry name" value="TRANSLOCATOR PROTEIN"/>
    <property type="match status" value="1"/>
</dbReference>
<dbReference type="Pfam" id="PF03073">
    <property type="entry name" value="TspO_MBR"/>
    <property type="match status" value="1"/>
</dbReference>
<dbReference type="PIRSF" id="PIRSF005859">
    <property type="entry name" value="PBR"/>
    <property type="match status" value="1"/>
</dbReference>
<reference key="1">
    <citation type="journal article" date="1997" name="Microbiology">
        <title>Sequencing and functional annotation of the Bacillus subtilis genes in the 200 kb rrnB-dnaB region.</title>
        <authorList>
            <person name="Lapidus A."/>
            <person name="Galleron N."/>
            <person name="Sorokin A."/>
            <person name="Ehrlich S.D."/>
        </authorList>
    </citation>
    <scope>NUCLEOTIDE SEQUENCE [GENOMIC DNA]</scope>
    <source>
        <strain>168</strain>
    </source>
</reference>
<reference key="2">
    <citation type="journal article" date="1997" name="Nature">
        <title>The complete genome sequence of the Gram-positive bacterium Bacillus subtilis.</title>
        <authorList>
            <person name="Kunst F."/>
            <person name="Ogasawara N."/>
            <person name="Moszer I."/>
            <person name="Albertini A.M."/>
            <person name="Alloni G."/>
            <person name="Azevedo V."/>
            <person name="Bertero M.G."/>
            <person name="Bessieres P."/>
            <person name="Bolotin A."/>
            <person name="Borchert S."/>
            <person name="Borriss R."/>
            <person name="Boursier L."/>
            <person name="Brans A."/>
            <person name="Braun M."/>
            <person name="Brignell S.C."/>
            <person name="Bron S."/>
            <person name="Brouillet S."/>
            <person name="Bruschi C.V."/>
            <person name="Caldwell B."/>
            <person name="Capuano V."/>
            <person name="Carter N.M."/>
            <person name="Choi S.-K."/>
            <person name="Codani J.-J."/>
            <person name="Connerton I.F."/>
            <person name="Cummings N.J."/>
            <person name="Daniel R.A."/>
            <person name="Denizot F."/>
            <person name="Devine K.M."/>
            <person name="Duesterhoeft A."/>
            <person name="Ehrlich S.D."/>
            <person name="Emmerson P.T."/>
            <person name="Entian K.-D."/>
            <person name="Errington J."/>
            <person name="Fabret C."/>
            <person name="Ferrari E."/>
            <person name="Foulger D."/>
            <person name="Fritz C."/>
            <person name="Fujita M."/>
            <person name="Fujita Y."/>
            <person name="Fuma S."/>
            <person name="Galizzi A."/>
            <person name="Galleron N."/>
            <person name="Ghim S.-Y."/>
            <person name="Glaser P."/>
            <person name="Goffeau A."/>
            <person name="Golightly E.J."/>
            <person name="Grandi G."/>
            <person name="Guiseppi G."/>
            <person name="Guy B.J."/>
            <person name="Haga K."/>
            <person name="Haiech J."/>
            <person name="Harwood C.R."/>
            <person name="Henaut A."/>
            <person name="Hilbert H."/>
            <person name="Holsappel S."/>
            <person name="Hosono S."/>
            <person name="Hullo M.-F."/>
            <person name="Itaya M."/>
            <person name="Jones L.-M."/>
            <person name="Joris B."/>
            <person name="Karamata D."/>
            <person name="Kasahara Y."/>
            <person name="Klaerr-Blanchard M."/>
            <person name="Klein C."/>
            <person name="Kobayashi Y."/>
            <person name="Koetter P."/>
            <person name="Koningstein G."/>
            <person name="Krogh S."/>
            <person name="Kumano M."/>
            <person name="Kurita K."/>
            <person name="Lapidus A."/>
            <person name="Lardinois S."/>
            <person name="Lauber J."/>
            <person name="Lazarevic V."/>
            <person name="Lee S.-M."/>
            <person name="Levine A."/>
            <person name="Liu H."/>
            <person name="Masuda S."/>
            <person name="Mauel C."/>
            <person name="Medigue C."/>
            <person name="Medina N."/>
            <person name="Mellado R.P."/>
            <person name="Mizuno M."/>
            <person name="Moestl D."/>
            <person name="Nakai S."/>
            <person name="Noback M."/>
            <person name="Noone D."/>
            <person name="O'Reilly M."/>
            <person name="Ogawa K."/>
            <person name="Ogiwara A."/>
            <person name="Oudega B."/>
            <person name="Park S.-H."/>
            <person name="Parro V."/>
            <person name="Pohl T.M."/>
            <person name="Portetelle D."/>
            <person name="Porwollik S."/>
            <person name="Prescott A.M."/>
            <person name="Presecan E."/>
            <person name="Pujic P."/>
            <person name="Purnelle B."/>
            <person name="Rapoport G."/>
            <person name="Rey M."/>
            <person name="Reynolds S."/>
            <person name="Rieger M."/>
            <person name="Rivolta C."/>
            <person name="Rocha E."/>
            <person name="Roche B."/>
            <person name="Rose M."/>
            <person name="Sadaie Y."/>
            <person name="Sato T."/>
            <person name="Scanlan E."/>
            <person name="Schleich S."/>
            <person name="Schroeter R."/>
            <person name="Scoffone F."/>
            <person name="Sekiguchi J."/>
            <person name="Sekowska A."/>
            <person name="Seror S.J."/>
            <person name="Serror P."/>
            <person name="Shin B.-S."/>
            <person name="Soldo B."/>
            <person name="Sorokin A."/>
            <person name="Tacconi E."/>
            <person name="Takagi T."/>
            <person name="Takahashi H."/>
            <person name="Takemaru K."/>
            <person name="Takeuchi M."/>
            <person name="Tamakoshi A."/>
            <person name="Tanaka T."/>
            <person name="Terpstra P."/>
            <person name="Tognoni A."/>
            <person name="Tosato V."/>
            <person name="Uchiyama S."/>
            <person name="Vandenbol M."/>
            <person name="Vannier F."/>
            <person name="Vassarotti A."/>
            <person name="Viari A."/>
            <person name="Wambutt R."/>
            <person name="Wedler E."/>
            <person name="Wedler H."/>
            <person name="Weitzenegger T."/>
            <person name="Winters P."/>
            <person name="Wipat A."/>
            <person name="Yamamoto H."/>
            <person name="Yamane K."/>
            <person name="Yasumoto K."/>
            <person name="Yata K."/>
            <person name="Yoshida K."/>
            <person name="Yoshikawa H.-F."/>
            <person name="Zumstein E."/>
            <person name="Yoshikawa H."/>
            <person name="Danchin A."/>
        </authorList>
    </citation>
    <scope>NUCLEOTIDE SEQUENCE [LARGE SCALE GENOMIC DNA]</scope>
    <source>
        <strain>168</strain>
    </source>
</reference>